<sequence>MNIHEYQAKQILKRFGISVPEGVIVHSLNEVNDAINKINSKVIVVKAQIHAGGRGKAGGVIVSRTLDEAKTAIKNMLGSTLVTHQTSKDGQKVRKVYLEEGCDIKKEYYISAIVNRKHGQISIIFSTEGGVDIEEVAANSPEKVVTCNIDPIFGFQGFHGRNLCFDSNLSVDQTRKITSIAEKIYKTMLETDASQIEINPLIETSSGDFIALDAKMNFDDNAIYRHPEILELRDYDEEIPEEIEASKHGLSYIKMDGNIGCMVNGAGLAMATMDIIKYYGAEPANFLDVGGGASQQTVTEAFKIILSDNVDGILVNIFGGIMRCDIIANGIIAAIQEIGINVPLVVRLSGTNFELGKKLLDNSKLNIITAHDLSEAAYNIVNIVKK</sequence>
<evidence type="ECO:0000255" key="1">
    <source>
        <dbReference type="HAMAP-Rule" id="MF_00558"/>
    </source>
</evidence>
<keyword id="KW-0067">ATP-binding</keyword>
<keyword id="KW-0436">Ligase</keyword>
<keyword id="KW-0460">Magnesium</keyword>
<keyword id="KW-0479">Metal-binding</keyword>
<keyword id="KW-0547">Nucleotide-binding</keyword>
<keyword id="KW-0816">Tricarboxylic acid cycle</keyword>
<dbReference type="EC" id="6.2.1.5" evidence="1"/>
<dbReference type="EMBL" id="CR767821">
    <property type="protein sequence ID" value="CAH57868.1"/>
    <property type="molecule type" value="Genomic_DNA"/>
</dbReference>
<dbReference type="EMBL" id="CR925678">
    <property type="protein sequence ID" value="CAI26642.1"/>
    <property type="molecule type" value="Genomic_DNA"/>
</dbReference>
<dbReference type="RefSeq" id="WP_011154836.1">
    <property type="nucleotide sequence ID" value="NC_005295.2"/>
</dbReference>
<dbReference type="SMR" id="Q5HC25"/>
<dbReference type="GeneID" id="33057825"/>
<dbReference type="KEGG" id="eru:Erum1520"/>
<dbReference type="KEGG" id="erw:ERWE_CDS_01480"/>
<dbReference type="eggNOG" id="COG0045">
    <property type="taxonomic scope" value="Bacteria"/>
</dbReference>
<dbReference type="HOGENOM" id="CLU_037430_0_2_5"/>
<dbReference type="UniPathway" id="UPA00223">
    <property type="reaction ID" value="UER00999"/>
</dbReference>
<dbReference type="Proteomes" id="UP000001021">
    <property type="component" value="Chromosome"/>
</dbReference>
<dbReference type="GO" id="GO:0005829">
    <property type="term" value="C:cytosol"/>
    <property type="evidence" value="ECO:0007669"/>
    <property type="project" value="TreeGrafter"/>
</dbReference>
<dbReference type="GO" id="GO:0042709">
    <property type="term" value="C:succinate-CoA ligase complex"/>
    <property type="evidence" value="ECO:0007669"/>
    <property type="project" value="TreeGrafter"/>
</dbReference>
<dbReference type="GO" id="GO:0005524">
    <property type="term" value="F:ATP binding"/>
    <property type="evidence" value="ECO:0007669"/>
    <property type="project" value="UniProtKB-UniRule"/>
</dbReference>
<dbReference type="GO" id="GO:0000287">
    <property type="term" value="F:magnesium ion binding"/>
    <property type="evidence" value="ECO:0007669"/>
    <property type="project" value="UniProtKB-UniRule"/>
</dbReference>
<dbReference type="GO" id="GO:0004775">
    <property type="term" value="F:succinate-CoA ligase (ADP-forming) activity"/>
    <property type="evidence" value="ECO:0007669"/>
    <property type="project" value="UniProtKB-UniRule"/>
</dbReference>
<dbReference type="GO" id="GO:0004776">
    <property type="term" value="F:succinate-CoA ligase (GDP-forming) activity"/>
    <property type="evidence" value="ECO:0007669"/>
    <property type="project" value="RHEA"/>
</dbReference>
<dbReference type="GO" id="GO:0006104">
    <property type="term" value="P:succinyl-CoA metabolic process"/>
    <property type="evidence" value="ECO:0007669"/>
    <property type="project" value="TreeGrafter"/>
</dbReference>
<dbReference type="GO" id="GO:0006099">
    <property type="term" value="P:tricarboxylic acid cycle"/>
    <property type="evidence" value="ECO:0007669"/>
    <property type="project" value="UniProtKB-UniRule"/>
</dbReference>
<dbReference type="FunFam" id="3.30.1490.20:FF:000002">
    <property type="entry name" value="Succinate--CoA ligase [ADP-forming] subunit beta"/>
    <property type="match status" value="1"/>
</dbReference>
<dbReference type="FunFam" id="3.30.470.20:FF:000002">
    <property type="entry name" value="Succinate--CoA ligase [ADP-forming] subunit beta"/>
    <property type="match status" value="1"/>
</dbReference>
<dbReference type="FunFam" id="3.40.50.261:FF:000001">
    <property type="entry name" value="Succinate--CoA ligase [ADP-forming] subunit beta"/>
    <property type="match status" value="1"/>
</dbReference>
<dbReference type="Gene3D" id="3.30.1490.20">
    <property type="entry name" value="ATP-grasp fold, A domain"/>
    <property type="match status" value="1"/>
</dbReference>
<dbReference type="Gene3D" id="3.30.470.20">
    <property type="entry name" value="ATP-grasp fold, B domain"/>
    <property type="match status" value="1"/>
</dbReference>
<dbReference type="Gene3D" id="3.40.50.261">
    <property type="entry name" value="Succinyl-CoA synthetase domains"/>
    <property type="match status" value="1"/>
</dbReference>
<dbReference type="HAMAP" id="MF_00558">
    <property type="entry name" value="Succ_CoA_beta"/>
    <property type="match status" value="1"/>
</dbReference>
<dbReference type="InterPro" id="IPR011761">
    <property type="entry name" value="ATP-grasp"/>
</dbReference>
<dbReference type="InterPro" id="IPR013650">
    <property type="entry name" value="ATP-grasp_succ-CoA_synth-type"/>
</dbReference>
<dbReference type="InterPro" id="IPR013815">
    <property type="entry name" value="ATP_grasp_subdomain_1"/>
</dbReference>
<dbReference type="InterPro" id="IPR017866">
    <property type="entry name" value="Succ-CoA_synthase_bsu_CS"/>
</dbReference>
<dbReference type="InterPro" id="IPR005811">
    <property type="entry name" value="SUCC_ACL_C"/>
</dbReference>
<dbReference type="InterPro" id="IPR005809">
    <property type="entry name" value="Succ_CoA_ligase-like_bsu"/>
</dbReference>
<dbReference type="InterPro" id="IPR016102">
    <property type="entry name" value="Succinyl-CoA_synth-like"/>
</dbReference>
<dbReference type="NCBIfam" id="NF001913">
    <property type="entry name" value="PRK00696.1"/>
    <property type="match status" value="1"/>
</dbReference>
<dbReference type="NCBIfam" id="TIGR01016">
    <property type="entry name" value="sucCoAbeta"/>
    <property type="match status" value="1"/>
</dbReference>
<dbReference type="PANTHER" id="PTHR11815:SF10">
    <property type="entry name" value="SUCCINATE--COA LIGASE [GDP-FORMING] SUBUNIT BETA, MITOCHONDRIAL"/>
    <property type="match status" value="1"/>
</dbReference>
<dbReference type="PANTHER" id="PTHR11815">
    <property type="entry name" value="SUCCINYL-COA SYNTHETASE BETA CHAIN"/>
    <property type="match status" value="1"/>
</dbReference>
<dbReference type="Pfam" id="PF08442">
    <property type="entry name" value="ATP-grasp_2"/>
    <property type="match status" value="1"/>
</dbReference>
<dbReference type="Pfam" id="PF00549">
    <property type="entry name" value="Ligase_CoA"/>
    <property type="match status" value="1"/>
</dbReference>
<dbReference type="PIRSF" id="PIRSF001554">
    <property type="entry name" value="SucCS_beta"/>
    <property type="match status" value="1"/>
</dbReference>
<dbReference type="SUPFAM" id="SSF56059">
    <property type="entry name" value="Glutathione synthetase ATP-binding domain-like"/>
    <property type="match status" value="1"/>
</dbReference>
<dbReference type="SUPFAM" id="SSF52210">
    <property type="entry name" value="Succinyl-CoA synthetase domains"/>
    <property type="match status" value="1"/>
</dbReference>
<dbReference type="PROSITE" id="PS50975">
    <property type="entry name" value="ATP_GRASP"/>
    <property type="match status" value="1"/>
</dbReference>
<dbReference type="PROSITE" id="PS01217">
    <property type="entry name" value="SUCCINYL_COA_LIG_3"/>
    <property type="match status" value="1"/>
</dbReference>
<feature type="chain" id="PRO_1000082079" description="Succinate--CoA ligase [ADP-forming] subunit beta">
    <location>
        <begin position="1"/>
        <end position="386"/>
    </location>
</feature>
<feature type="domain" description="ATP-grasp" evidence="1">
    <location>
        <begin position="9"/>
        <end position="244"/>
    </location>
</feature>
<feature type="binding site" evidence="1">
    <location>
        <position position="46"/>
    </location>
    <ligand>
        <name>ATP</name>
        <dbReference type="ChEBI" id="CHEBI:30616"/>
    </ligand>
</feature>
<feature type="binding site" evidence="1">
    <location>
        <begin position="53"/>
        <end position="55"/>
    </location>
    <ligand>
        <name>ATP</name>
        <dbReference type="ChEBI" id="CHEBI:30616"/>
    </ligand>
</feature>
<feature type="binding site" evidence="1">
    <location>
        <position position="99"/>
    </location>
    <ligand>
        <name>ATP</name>
        <dbReference type="ChEBI" id="CHEBI:30616"/>
    </ligand>
</feature>
<feature type="binding site" evidence="1">
    <location>
        <position position="102"/>
    </location>
    <ligand>
        <name>ATP</name>
        <dbReference type="ChEBI" id="CHEBI:30616"/>
    </ligand>
</feature>
<feature type="binding site" evidence="1">
    <location>
        <position position="107"/>
    </location>
    <ligand>
        <name>ATP</name>
        <dbReference type="ChEBI" id="CHEBI:30616"/>
    </ligand>
</feature>
<feature type="binding site" evidence="1">
    <location>
        <position position="199"/>
    </location>
    <ligand>
        <name>Mg(2+)</name>
        <dbReference type="ChEBI" id="CHEBI:18420"/>
    </ligand>
</feature>
<feature type="binding site" evidence="1">
    <location>
        <position position="213"/>
    </location>
    <ligand>
        <name>Mg(2+)</name>
        <dbReference type="ChEBI" id="CHEBI:18420"/>
    </ligand>
</feature>
<feature type="binding site" evidence="1">
    <location>
        <position position="264"/>
    </location>
    <ligand>
        <name>substrate</name>
        <note>ligand shared with subunit alpha</note>
    </ligand>
</feature>
<feature type="binding site" evidence="1">
    <location>
        <begin position="320"/>
        <end position="322"/>
    </location>
    <ligand>
        <name>substrate</name>
        <note>ligand shared with subunit alpha</note>
    </ligand>
</feature>
<organism>
    <name type="scientific">Ehrlichia ruminantium (strain Welgevonden)</name>
    <dbReference type="NCBI Taxonomy" id="254945"/>
    <lineage>
        <taxon>Bacteria</taxon>
        <taxon>Pseudomonadati</taxon>
        <taxon>Pseudomonadota</taxon>
        <taxon>Alphaproteobacteria</taxon>
        <taxon>Rickettsiales</taxon>
        <taxon>Anaplasmataceae</taxon>
        <taxon>Ehrlichia</taxon>
    </lineage>
</organism>
<protein>
    <recommendedName>
        <fullName evidence="1">Succinate--CoA ligase [ADP-forming] subunit beta</fullName>
        <ecNumber evidence="1">6.2.1.5</ecNumber>
    </recommendedName>
    <alternativeName>
        <fullName evidence="1">Succinyl-CoA synthetase subunit beta</fullName>
        <shortName evidence="1">SCS-beta</shortName>
    </alternativeName>
</protein>
<reference key="1">
    <citation type="journal article" date="2005" name="Proc. Natl. Acad. Sci. U.S.A.">
        <title>The genome of the heartwater agent Ehrlichia ruminantium contains multiple tandem repeats of actively variable copy number.</title>
        <authorList>
            <person name="Collins N.E."/>
            <person name="Liebenberg J."/>
            <person name="de Villiers E.P."/>
            <person name="Brayton K.A."/>
            <person name="Louw E."/>
            <person name="Pretorius A."/>
            <person name="Faber F.E."/>
            <person name="van Heerden H."/>
            <person name="Josemans A."/>
            <person name="van Kleef M."/>
            <person name="Steyn H.C."/>
            <person name="van Strijp M.F."/>
            <person name="Zweygarth E."/>
            <person name="Jongejan F."/>
            <person name="Maillard J.C."/>
            <person name="Berthier D."/>
            <person name="Botha M."/>
            <person name="Joubert F."/>
            <person name="Corton C.H."/>
            <person name="Thomson N.R."/>
            <person name="Allsopp M.T."/>
            <person name="Allsopp B.A."/>
        </authorList>
    </citation>
    <scope>NUCLEOTIDE SEQUENCE [LARGE SCALE GENOMIC DNA]</scope>
    <source>
        <strain>Welgevonden</strain>
    </source>
</reference>
<reference key="2">
    <citation type="journal article" date="2006" name="J. Bacteriol.">
        <title>Comparative genomic analysis of three strains of Ehrlichia ruminantium reveals an active process of genome size plasticity.</title>
        <authorList>
            <person name="Frutos R."/>
            <person name="Viari A."/>
            <person name="Ferraz C."/>
            <person name="Morgat A."/>
            <person name="Eychenie S."/>
            <person name="Kandassamy Y."/>
            <person name="Chantal I."/>
            <person name="Bensaid A."/>
            <person name="Coissac E."/>
            <person name="Vachiery N."/>
            <person name="Demaille J."/>
            <person name="Martinez D."/>
        </authorList>
    </citation>
    <scope>NUCLEOTIDE SEQUENCE [LARGE SCALE GENOMIC DNA]</scope>
    <source>
        <strain>Welgevonden</strain>
    </source>
</reference>
<proteinExistence type="inferred from homology"/>
<accession>Q5HC25</accession>
<accession>Q5FCT5</accession>
<comment type="function">
    <text evidence="1">Succinyl-CoA synthetase functions in the citric acid cycle (TCA), coupling the hydrolysis of succinyl-CoA to the synthesis of either ATP or GTP and thus represents the only step of substrate-level phosphorylation in the TCA. The beta subunit provides nucleotide specificity of the enzyme and binds the substrate succinate, while the binding sites for coenzyme A and phosphate are found in the alpha subunit.</text>
</comment>
<comment type="catalytic activity">
    <reaction evidence="1">
        <text>succinate + ATP + CoA = succinyl-CoA + ADP + phosphate</text>
        <dbReference type="Rhea" id="RHEA:17661"/>
        <dbReference type="ChEBI" id="CHEBI:30031"/>
        <dbReference type="ChEBI" id="CHEBI:30616"/>
        <dbReference type="ChEBI" id="CHEBI:43474"/>
        <dbReference type="ChEBI" id="CHEBI:57287"/>
        <dbReference type="ChEBI" id="CHEBI:57292"/>
        <dbReference type="ChEBI" id="CHEBI:456216"/>
        <dbReference type="EC" id="6.2.1.5"/>
    </reaction>
    <physiologicalReaction direction="right-to-left" evidence="1">
        <dbReference type="Rhea" id="RHEA:17663"/>
    </physiologicalReaction>
</comment>
<comment type="catalytic activity">
    <reaction evidence="1">
        <text>GTP + succinate + CoA = succinyl-CoA + GDP + phosphate</text>
        <dbReference type="Rhea" id="RHEA:22120"/>
        <dbReference type="ChEBI" id="CHEBI:30031"/>
        <dbReference type="ChEBI" id="CHEBI:37565"/>
        <dbReference type="ChEBI" id="CHEBI:43474"/>
        <dbReference type="ChEBI" id="CHEBI:57287"/>
        <dbReference type="ChEBI" id="CHEBI:57292"/>
        <dbReference type="ChEBI" id="CHEBI:58189"/>
    </reaction>
    <physiologicalReaction direction="right-to-left" evidence="1">
        <dbReference type="Rhea" id="RHEA:22122"/>
    </physiologicalReaction>
</comment>
<comment type="cofactor">
    <cofactor evidence="1">
        <name>Mg(2+)</name>
        <dbReference type="ChEBI" id="CHEBI:18420"/>
    </cofactor>
    <text evidence="1">Binds 1 Mg(2+) ion per subunit.</text>
</comment>
<comment type="pathway">
    <text evidence="1">Carbohydrate metabolism; tricarboxylic acid cycle; succinate from succinyl-CoA (ligase route): step 1/1.</text>
</comment>
<comment type="subunit">
    <text evidence="1">Heterotetramer of two alpha and two beta subunits.</text>
</comment>
<comment type="similarity">
    <text evidence="1">Belongs to the succinate/malate CoA ligase beta subunit family.</text>
</comment>
<gene>
    <name evidence="1" type="primary">sucC</name>
    <name type="ordered locus">Erum1520</name>
    <name type="ordered locus">ERWE_CDS_01480</name>
</gene>
<name>SUCC_EHRRW</name>